<dbReference type="EMBL" id="CP000608">
    <property type="protein sequence ID" value="ABO47520.1"/>
    <property type="molecule type" value="Genomic_DNA"/>
</dbReference>
<dbReference type="RefSeq" id="WP_003014194.1">
    <property type="nucleotide sequence ID" value="NC_009257.1"/>
</dbReference>
<dbReference type="SMR" id="A4J019"/>
<dbReference type="KEGG" id="ftw:FTW_1860"/>
<dbReference type="HOGENOM" id="CLU_074944_0_0_6"/>
<dbReference type="UniPathway" id="UPA00345"/>
<dbReference type="GO" id="GO:0005737">
    <property type="term" value="C:cytoplasm"/>
    <property type="evidence" value="ECO:0007669"/>
    <property type="project" value="UniProtKB-SubCell"/>
</dbReference>
<dbReference type="GO" id="GO:0003746">
    <property type="term" value="F:translation elongation factor activity"/>
    <property type="evidence" value="ECO:0007669"/>
    <property type="project" value="UniProtKB-UniRule"/>
</dbReference>
<dbReference type="GO" id="GO:0043043">
    <property type="term" value="P:peptide biosynthetic process"/>
    <property type="evidence" value="ECO:0007669"/>
    <property type="project" value="InterPro"/>
</dbReference>
<dbReference type="CDD" id="cd04470">
    <property type="entry name" value="S1_EF-P_repeat_1"/>
    <property type="match status" value="1"/>
</dbReference>
<dbReference type="CDD" id="cd05794">
    <property type="entry name" value="S1_EF-P_repeat_2"/>
    <property type="match status" value="1"/>
</dbReference>
<dbReference type="FunFam" id="2.30.30.30:FF:000003">
    <property type="entry name" value="Elongation factor P"/>
    <property type="match status" value="1"/>
</dbReference>
<dbReference type="FunFam" id="2.40.50.140:FF:000004">
    <property type="entry name" value="Elongation factor P"/>
    <property type="match status" value="1"/>
</dbReference>
<dbReference type="FunFam" id="2.40.50.140:FF:000009">
    <property type="entry name" value="Elongation factor P"/>
    <property type="match status" value="1"/>
</dbReference>
<dbReference type="Gene3D" id="2.30.30.30">
    <property type="match status" value="1"/>
</dbReference>
<dbReference type="Gene3D" id="2.40.50.140">
    <property type="entry name" value="Nucleic acid-binding proteins"/>
    <property type="match status" value="2"/>
</dbReference>
<dbReference type="HAMAP" id="MF_00141">
    <property type="entry name" value="EF_P"/>
    <property type="match status" value="1"/>
</dbReference>
<dbReference type="InterPro" id="IPR015365">
    <property type="entry name" value="Elong-fact-P_C"/>
</dbReference>
<dbReference type="InterPro" id="IPR012340">
    <property type="entry name" value="NA-bd_OB-fold"/>
</dbReference>
<dbReference type="InterPro" id="IPR014722">
    <property type="entry name" value="Rib_uL2_dom2"/>
</dbReference>
<dbReference type="InterPro" id="IPR020599">
    <property type="entry name" value="Transl_elong_fac_P/YeiP"/>
</dbReference>
<dbReference type="InterPro" id="IPR013185">
    <property type="entry name" value="Transl_elong_KOW-like"/>
</dbReference>
<dbReference type="InterPro" id="IPR001059">
    <property type="entry name" value="Transl_elong_P/YeiP_cen"/>
</dbReference>
<dbReference type="InterPro" id="IPR013852">
    <property type="entry name" value="Transl_elong_P/YeiP_CS"/>
</dbReference>
<dbReference type="InterPro" id="IPR011768">
    <property type="entry name" value="Transl_elongation_fac_P"/>
</dbReference>
<dbReference type="InterPro" id="IPR008991">
    <property type="entry name" value="Translation_prot_SH3-like_sf"/>
</dbReference>
<dbReference type="NCBIfam" id="TIGR00038">
    <property type="entry name" value="efp"/>
    <property type="match status" value="1"/>
</dbReference>
<dbReference type="NCBIfam" id="NF001810">
    <property type="entry name" value="PRK00529.1"/>
    <property type="match status" value="1"/>
</dbReference>
<dbReference type="PANTHER" id="PTHR30053">
    <property type="entry name" value="ELONGATION FACTOR P"/>
    <property type="match status" value="1"/>
</dbReference>
<dbReference type="PANTHER" id="PTHR30053:SF12">
    <property type="entry name" value="ELONGATION FACTOR P (EF-P) FAMILY PROTEIN"/>
    <property type="match status" value="1"/>
</dbReference>
<dbReference type="Pfam" id="PF01132">
    <property type="entry name" value="EFP"/>
    <property type="match status" value="1"/>
</dbReference>
<dbReference type="Pfam" id="PF08207">
    <property type="entry name" value="EFP_N"/>
    <property type="match status" value="1"/>
</dbReference>
<dbReference type="Pfam" id="PF09285">
    <property type="entry name" value="Elong-fact-P_C"/>
    <property type="match status" value="1"/>
</dbReference>
<dbReference type="PIRSF" id="PIRSF005901">
    <property type="entry name" value="EF-P"/>
    <property type="match status" value="1"/>
</dbReference>
<dbReference type="SMART" id="SM01185">
    <property type="entry name" value="EFP"/>
    <property type="match status" value="1"/>
</dbReference>
<dbReference type="SMART" id="SM00841">
    <property type="entry name" value="Elong-fact-P_C"/>
    <property type="match status" value="1"/>
</dbReference>
<dbReference type="SUPFAM" id="SSF50249">
    <property type="entry name" value="Nucleic acid-binding proteins"/>
    <property type="match status" value="2"/>
</dbReference>
<dbReference type="SUPFAM" id="SSF50104">
    <property type="entry name" value="Translation proteins SH3-like domain"/>
    <property type="match status" value="1"/>
</dbReference>
<dbReference type="PROSITE" id="PS01275">
    <property type="entry name" value="EFP"/>
    <property type="match status" value="1"/>
</dbReference>
<accession>A4J019</accession>
<keyword id="KW-0963">Cytoplasm</keyword>
<keyword id="KW-0251">Elongation factor</keyword>
<keyword id="KW-0379">Hydroxylation</keyword>
<keyword id="KW-0648">Protein biosynthesis</keyword>
<feature type="chain" id="PRO_1000010750" description="Elongation factor P">
    <location>
        <begin position="1"/>
        <end position="189"/>
    </location>
</feature>
<feature type="modified residue" description="N6-(3,6-diaminohexanoyl)-5-hydroxylysine" evidence="1">
    <location>
        <position position="34"/>
    </location>
</feature>
<evidence type="ECO:0000255" key="1">
    <source>
        <dbReference type="HAMAP-Rule" id="MF_00141"/>
    </source>
</evidence>
<proteinExistence type="inferred from homology"/>
<protein>
    <recommendedName>
        <fullName evidence="1">Elongation factor P</fullName>
        <shortName evidence="1">EF-P</shortName>
    </recommendedName>
</protein>
<name>EFP_FRATW</name>
<comment type="function">
    <text evidence="1">Involved in peptide bond synthesis. Alleviates ribosome stalling that occurs when 3 or more consecutive Pro residues or the sequence PPG is present in a protein, possibly by augmenting the peptidyl transferase activity of the ribosome. Modification of Lys-34 is required for alleviation.</text>
</comment>
<comment type="pathway">
    <text evidence="1">Protein biosynthesis; polypeptide chain elongation.</text>
</comment>
<comment type="subcellular location">
    <subcellularLocation>
        <location evidence="1">Cytoplasm</location>
    </subcellularLocation>
</comment>
<comment type="PTM">
    <text evidence="1">May be beta-lysylated on the epsilon-amino group of Lys-34 by the combined action of EpmA and EpmB, and then hydroxylated on the C5 position of the same residue by EpmC (if this protein is present). Lysylation is critical for the stimulatory effect of EF-P on peptide-bond formation. The lysylation moiety may extend toward the peptidyltransferase center and stabilize the terminal 3-CCA end of the tRNA. Hydroxylation of the C5 position on Lys-34 may allow additional potential stabilizing hydrogen-bond interactions with the P-tRNA.</text>
</comment>
<comment type="similarity">
    <text evidence="1">Belongs to the elongation factor P family.</text>
</comment>
<sequence length="189" mass="20903">MASYSTNEFKGGLKVLIDGNPMVIVENEFVKPGKGQAFNRVKLKNLLNDRVVEKTFKSGESVEAADVEELTTVYSYFDGDSYVFMHPETFEQYMVSEEALGETKKWLKDQDEYQVILFNGQPISIIAANFVNLEIIETDPGLKGDTAGTGGKPATLSTGAVVRVPLFVQTGEIIKVDTRTSTYVSRVKD</sequence>
<reference key="1">
    <citation type="journal article" date="2007" name="PLoS ONE">
        <title>Complete genomic characterization of a pathogenic A.II strain of Francisella tularensis subspecies tularensis.</title>
        <authorList>
            <person name="Beckstrom-Sternberg S.M."/>
            <person name="Auerbach R.K."/>
            <person name="Godbole S."/>
            <person name="Pearson J.V."/>
            <person name="Beckstrom-Sternberg J.S."/>
            <person name="Deng Z."/>
            <person name="Munk C."/>
            <person name="Kubota K."/>
            <person name="Zhou Y."/>
            <person name="Bruce D."/>
            <person name="Noronha J."/>
            <person name="Scheuermann R.H."/>
            <person name="Wang A."/>
            <person name="Wei X."/>
            <person name="Wang J."/>
            <person name="Hao J."/>
            <person name="Wagner D.M."/>
            <person name="Brettin T.S."/>
            <person name="Brown N."/>
            <person name="Gilna P."/>
            <person name="Keim P.S."/>
        </authorList>
    </citation>
    <scope>NUCLEOTIDE SEQUENCE [LARGE SCALE GENOMIC DNA]</scope>
    <source>
        <strain>WY96-3418</strain>
    </source>
</reference>
<organism>
    <name type="scientific">Francisella tularensis subsp. tularensis (strain WY96-3418)</name>
    <dbReference type="NCBI Taxonomy" id="418136"/>
    <lineage>
        <taxon>Bacteria</taxon>
        <taxon>Pseudomonadati</taxon>
        <taxon>Pseudomonadota</taxon>
        <taxon>Gammaproteobacteria</taxon>
        <taxon>Thiotrichales</taxon>
        <taxon>Francisellaceae</taxon>
        <taxon>Francisella</taxon>
    </lineage>
</organism>
<gene>
    <name evidence="1" type="primary">efp</name>
    <name type="ordered locus">FTW_1860</name>
</gene>